<accession>P0A5G0</accession>
<accession>A0A1R3Y223</accession>
<accession>Q10852</accession>
<accession>X2BJI8</accession>
<feature type="chain" id="PRO_0000103933" description="Uncharacterized protein Mb2027c">
    <location>
        <begin position="1"/>
        <end position="498"/>
    </location>
</feature>
<feature type="binding site" evidence="1">
    <location>
        <begin position="329"/>
        <end position="336"/>
    </location>
    <ligand>
        <name>ATP</name>
        <dbReference type="ChEBI" id="CHEBI:30616"/>
    </ligand>
</feature>
<organism>
    <name type="scientific">Mycobacterium bovis (strain ATCC BAA-935 / AF2122/97)</name>
    <dbReference type="NCBI Taxonomy" id="233413"/>
    <lineage>
        <taxon>Bacteria</taxon>
        <taxon>Bacillati</taxon>
        <taxon>Actinomycetota</taxon>
        <taxon>Actinomycetes</taxon>
        <taxon>Mycobacteriales</taxon>
        <taxon>Mycobacteriaceae</taxon>
        <taxon>Mycobacterium</taxon>
        <taxon>Mycobacterium tuberculosis complex</taxon>
    </lineage>
</organism>
<sequence length="498" mass="54423">MDSPTNDGTCDAHPVTDEPFIDVRETHTAVVVLAGDRAFKAKKPVVTDFCDFRTAEQRERACIREFELNSRLAAQSYLGIAHLSDPSGGHAEPVVVMRRYRDKQRLASMVTAGLPVEGALDAIAEVLARFHQRAQRNRCIDTQGEVGAVARRWHENLAELRHHADKVVSGDVIRRIEHMVDEFVSGREVLFAGRIKEGCIVDGHADLLADDIFLVDGEPALLDCLEFEDELRYLDRIDDAAFLAMDLEFLGRKDLGDYFLAGYAVRSGDTAPASLRDFYIAYRAVVRAKVECVRFSQGKPEAAADAVRHLIIATQHLQHATVRLALVGGNPGTGKSTLARGVAELVGAQVISTDDVRRRLRDCGVITGEPGVLDSGLYSRANVVAVYQEALRKARLLLGSGHSVILDGTWGDPQMRACARRLAADTHSAIVEFRCSATVDVMADRIVARAGGNSDATAEIAAALAARQADWDTGHRIDTAGPRERSVGQAYHIWRSAI</sequence>
<protein>
    <recommendedName>
        <fullName>Uncharacterized protein Mb2027c</fullName>
    </recommendedName>
</protein>
<evidence type="ECO:0000255" key="1"/>
<dbReference type="EMBL" id="LT708304">
    <property type="protein sequence ID" value="SIU00634.1"/>
    <property type="molecule type" value="Genomic_DNA"/>
</dbReference>
<dbReference type="RefSeq" id="NP_855677.1">
    <property type="nucleotide sequence ID" value="NC_002945.3"/>
</dbReference>
<dbReference type="RefSeq" id="WP_003410057.1">
    <property type="nucleotide sequence ID" value="NC_002945.4"/>
</dbReference>
<dbReference type="KEGG" id="mbo:BQ2027_MB2027C"/>
<dbReference type="PATRIC" id="fig|233413.5.peg.2227"/>
<dbReference type="Proteomes" id="UP000001419">
    <property type="component" value="Chromosome"/>
</dbReference>
<dbReference type="GO" id="GO:0005524">
    <property type="term" value="F:ATP binding"/>
    <property type="evidence" value="ECO:0007669"/>
    <property type="project" value="UniProtKB-KW"/>
</dbReference>
<dbReference type="Gene3D" id="3.40.50.300">
    <property type="entry name" value="P-loop containing nucleotide triphosphate hydrolases"/>
    <property type="match status" value="1"/>
</dbReference>
<dbReference type="InterPro" id="IPR052732">
    <property type="entry name" value="Cell-binding_unc_protein"/>
</dbReference>
<dbReference type="InterPro" id="IPR011009">
    <property type="entry name" value="Kinase-like_dom_sf"/>
</dbReference>
<dbReference type="InterPro" id="IPR027417">
    <property type="entry name" value="P-loop_NTPase"/>
</dbReference>
<dbReference type="PANTHER" id="PTHR43883:SF1">
    <property type="entry name" value="GLUCONOKINASE"/>
    <property type="match status" value="1"/>
</dbReference>
<dbReference type="PANTHER" id="PTHR43883">
    <property type="entry name" value="SLR0207 PROTEIN"/>
    <property type="match status" value="1"/>
</dbReference>
<dbReference type="Pfam" id="PF13671">
    <property type="entry name" value="AAA_33"/>
    <property type="match status" value="1"/>
</dbReference>
<dbReference type="SUPFAM" id="SSF52540">
    <property type="entry name" value="P-loop containing nucleoside triphosphate hydrolases"/>
    <property type="match status" value="1"/>
</dbReference>
<dbReference type="SUPFAM" id="SSF56112">
    <property type="entry name" value="Protein kinase-like (PK-like)"/>
    <property type="match status" value="1"/>
</dbReference>
<reference key="1">
    <citation type="journal article" date="2003" name="Proc. Natl. Acad. Sci. U.S.A.">
        <title>The complete genome sequence of Mycobacterium bovis.</title>
        <authorList>
            <person name="Garnier T."/>
            <person name="Eiglmeier K."/>
            <person name="Camus J.-C."/>
            <person name="Medina N."/>
            <person name="Mansoor H."/>
            <person name="Pryor M."/>
            <person name="Duthoy S."/>
            <person name="Grondin S."/>
            <person name="Lacroix C."/>
            <person name="Monsempe C."/>
            <person name="Simon S."/>
            <person name="Harris B."/>
            <person name="Atkin R."/>
            <person name="Doggett J."/>
            <person name="Mayes R."/>
            <person name="Keating L."/>
            <person name="Wheeler P.R."/>
            <person name="Parkhill J."/>
            <person name="Barrell B.G."/>
            <person name="Cole S.T."/>
            <person name="Gordon S.V."/>
            <person name="Hewinson R.G."/>
        </authorList>
    </citation>
    <scope>NUCLEOTIDE SEQUENCE [LARGE SCALE GENOMIC DNA]</scope>
    <source>
        <strain>ATCC BAA-935 / AF2122/97</strain>
    </source>
</reference>
<reference key="2">
    <citation type="journal article" date="2017" name="Genome Announc.">
        <title>Updated reference genome sequence and annotation of Mycobacterium bovis AF2122/97.</title>
        <authorList>
            <person name="Malone K.M."/>
            <person name="Farrell D."/>
            <person name="Stuber T.P."/>
            <person name="Schubert O.T."/>
            <person name="Aebersold R."/>
            <person name="Robbe-Austerman S."/>
            <person name="Gordon S.V."/>
        </authorList>
    </citation>
    <scope>NUCLEOTIDE SEQUENCE [LARGE SCALE GENOMIC DNA]</scope>
    <scope>GENOME REANNOTATION</scope>
    <source>
        <strain>ATCC BAA-935 / AF2122/97</strain>
    </source>
</reference>
<name>Y2027_MYCBO</name>
<proteinExistence type="predicted"/>
<keyword id="KW-0067">ATP-binding</keyword>
<keyword id="KW-0547">Nucleotide-binding</keyword>
<keyword id="KW-1185">Reference proteome</keyword>
<gene>
    <name type="ordered locus">BQ2027_MB2027C</name>
</gene>